<organism>
    <name type="scientific">Bacillus cytotoxicus (strain DSM 22905 / CIP 110041 / 391-98 / NVH 391-98)</name>
    <dbReference type="NCBI Taxonomy" id="315749"/>
    <lineage>
        <taxon>Bacteria</taxon>
        <taxon>Bacillati</taxon>
        <taxon>Bacillota</taxon>
        <taxon>Bacilli</taxon>
        <taxon>Bacillales</taxon>
        <taxon>Bacillaceae</taxon>
        <taxon>Bacillus</taxon>
        <taxon>Bacillus cereus group</taxon>
    </lineage>
</organism>
<gene>
    <name evidence="1" type="primary">addA</name>
    <name type="ordered locus">Bcer98_0860</name>
</gene>
<keyword id="KW-0067">ATP-binding</keyword>
<keyword id="KW-0227">DNA damage</keyword>
<keyword id="KW-0234">DNA repair</keyword>
<keyword id="KW-0238">DNA-binding</keyword>
<keyword id="KW-0269">Exonuclease</keyword>
<keyword id="KW-0347">Helicase</keyword>
<keyword id="KW-0378">Hydrolase</keyword>
<keyword id="KW-0413">Isomerase</keyword>
<keyword id="KW-0540">Nuclease</keyword>
<keyword id="KW-0547">Nucleotide-binding</keyword>
<feature type="chain" id="PRO_0000379240" description="ATP-dependent helicase/nuclease subunit A">
    <location>
        <begin position="1"/>
        <end position="1242"/>
    </location>
</feature>
<feature type="domain" description="UvrD-like helicase ATP-binding" evidence="1">
    <location>
        <begin position="13"/>
        <end position="486"/>
    </location>
</feature>
<feature type="domain" description="UvrD-like helicase C-terminal" evidence="1">
    <location>
        <begin position="506"/>
        <end position="806"/>
    </location>
</feature>
<feature type="binding site" evidence="1">
    <location>
        <begin position="34"/>
        <end position="41"/>
    </location>
    <ligand>
        <name>ATP</name>
        <dbReference type="ChEBI" id="CHEBI:30616"/>
    </ligand>
</feature>
<sequence>MMVENWPAKPEGSQWTDDQWKAVVAHGRDILVAAAAGSGKTAVLVERIIKKIINEENPVDVDRLLVVTFTNAAAQEMKNRIGEALEKVLIEEPSSRHIRKQLSLLNKASISTIHSFCLQVIRSYYYMLDIDPRFRIANQTENELLKEEVLDDILEEEYGMEENQLFFELVDRYTSDRNDDDLQRMILALHTAAGAHPNPEKWLDRLVEAYNVEGKTIEDLMYASYLLEDVKFQLETATEHIRKAMELAMLPDGPAPRMETLQTDLVLLETLSHAARKSWTSVYEAMQHVSWQTLKRIKKSDYNEDIVKQVDSLRNKAKDEVKKLQEELFSRKPESFLRDFQEMHPVLGKLVQLVKEFSNRFQAIKRDKGMVDFTDLEHFCLQILSEQGEDGELRPSPVALQYRNRFAEVLVDEYQDTNFVQESIIKLVTKDSEQEGNLFMVGDVKQSIYRFRLAEPGLFLGKYKRFTQEGLEGGMKIDLAKNFRSRHEVLAGTNFIFKQIMGEEVGEIEYDADAELKLGASYPEGEDVAAELLCIHQSEEEVLDGEEGEEVEKAQLEARLIAQRIKAMVDSGYTVYDRKTNEMRQVQYRDFVILLRSMPWAPQIMEELKLQGIPVYAELATGYFEATEVNIMMNVFRVIDNPVQDIPLAAVLRSPIVGLNDEELAMLRAHAKKGSFYEVMRSFLRGAPLEGGKELHEKLKWFYHLLQGWREFARQQSLSDLIWKVYRETGYYDFVGGLPGGKQRQANLRVLYDRARQYEATSFRGLFRFLRFIERILERGDDMGTARALGEQEDVVRIMTIHKSKGLEFPVVFVAGLGRRFNTQDLMQRFLLHKDFGFGSQFIDPRKRIKYTTLSQLAIKRKMKRELIAEEMRVLYVALTRAKEKLILIGTVKDKEKEMEKWLDTREHTEWLLPDYVRASASCYLDWIAPSLYRHRDSEILLELGQGTIPNEIYEYDTSWKVEFVDGKTLLAPEPAQEEKQELLEALREKKAVPLESERKDEVYNRLTWKYEYEDATLQRAKQSVTEIKRNYQSEDGSDTAFIQKLRAPIRTRPRFMEKKGLTYAERGTAVHAVMQHVDLKQSITIESIQEQIAKMVNKEILTFEQAEEISVERIVAFFESHLGKRVLEAKSVEREVPFTMMLSAKEAYQNWQGKSEETILVQGVIDCMIEEDDGITLIDFKTDTIEGKFPGGFDQAKPILEERYKVQLSLYAKALEKTLQHPVKEKCLYFFDGNHVITIEE</sequence>
<protein>
    <recommendedName>
        <fullName evidence="1">ATP-dependent helicase/nuclease subunit A</fullName>
        <ecNumber evidence="1">3.1.-.-</ecNumber>
        <ecNumber evidence="1">5.6.2.4</ecNumber>
    </recommendedName>
    <alternativeName>
        <fullName evidence="1">ATP-dependent helicase/nuclease AddA</fullName>
    </alternativeName>
    <alternativeName>
        <fullName evidence="1">DNA 3'-5' helicase AddA</fullName>
    </alternativeName>
</protein>
<accession>A7GM37</accession>
<dbReference type="EC" id="3.1.-.-" evidence="1"/>
<dbReference type="EC" id="5.6.2.4" evidence="1"/>
<dbReference type="EMBL" id="CP000764">
    <property type="protein sequence ID" value="ABS21195.1"/>
    <property type="molecule type" value="Genomic_DNA"/>
</dbReference>
<dbReference type="SMR" id="A7GM37"/>
<dbReference type="STRING" id="315749.Bcer98_0860"/>
<dbReference type="KEGG" id="bcy:Bcer98_0860"/>
<dbReference type="eggNOG" id="COG1074">
    <property type="taxonomic scope" value="Bacteria"/>
</dbReference>
<dbReference type="HOGENOM" id="CLU_001114_3_1_9"/>
<dbReference type="Proteomes" id="UP000002300">
    <property type="component" value="Chromosome"/>
</dbReference>
<dbReference type="GO" id="GO:0005829">
    <property type="term" value="C:cytosol"/>
    <property type="evidence" value="ECO:0007669"/>
    <property type="project" value="TreeGrafter"/>
</dbReference>
<dbReference type="GO" id="GO:0033202">
    <property type="term" value="C:DNA helicase complex"/>
    <property type="evidence" value="ECO:0007669"/>
    <property type="project" value="TreeGrafter"/>
</dbReference>
<dbReference type="GO" id="GO:0043138">
    <property type="term" value="F:3'-5' DNA helicase activity"/>
    <property type="evidence" value="ECO:0007669"/>
    <property type="project" value="UniProtKB-UniRule"/>
</dbReference>
<dbReference type="GO" id="GO:0008408">
    <property type="term" value="F:3'-5' exonuclease activity"/>
    <property type="evidence" value="ECO:0007669"/>
    <property type="project" value="UniProtKB-UniRule"/>
</dbReference>
<dbReference type="GO" id="GO:0005524">
    <property type="term" value="F:ATP binding"/>
    <property type="evidence" value="ECO:0007669"/>
    <property type="project" value="UniProtKB-UniRule"/>
</dbReference>
<dbReference type="GO" id="GO:0016887">
    <property type="term" value="F:ATP hydrolysis activity"/>
    <property type="evidence" value="ECO:0007669"/>
    <property type="project" value="RHEA"/>
</dbReference>
<dbReference type="GO" id="GO:0003690">
    <property type="term" value="F:double-stranded DNA binding"/>
    <property type="evidence" value="ECO:0007669"/>
    <property type="project" value="UniProtKB-UniRule"/>
</dbReference>
<dbReference type="GO" id="GO:0000724">
    <property type="term" value="P:double-strand break repair via homologous recombination"/>
    <property type="evidence" value="ECO:0007669"/>
    <property type="project" value="UniProtKB-UniRule"/>
</dbReference>
<dbReference type="CDD" id="cd17932">
    <property type="entry name" value="DEXQc_UvrD"/>
    <property type="match status" value="1"/>
</dbReference>
<dbReference type="CDD" id="cd18807">
    <property type="entry name" value="SF1_C_UvrD"/>
    <property type="match status" value="1"/>
</dbReference>
<dbReference type="FunFam" id="3.40.50.300:FF:001164">
    <property type="entry name" value="ATP-dependent helicase/nuclease subunit A"/>
    <property type="match status" value="1"/>
</dbReference>
<dbReference type="FunFam" id="3.40.50.300:FF:001187">
    <property type="entry name" value="ATP-dependent helicase/nuclease subunit A"/>
    <property type="match status" value="1"/>
</dbReference>
<dbReference type="FunFam" id="3.40.50.300:FF:001196">
    <property type="entry name" value="ATP-dependent helicase/nuclease subunit A"/>
    <property type="match status" value="1"/>
</dbReference>
<dbReference type="FunFam" id="3.40.50.300:FF:001236">
    <property type="entry name" value="ATP-dependent helicase/nuclease subunit A"/>
    <property type="match status" value="1"/>
</dbReference>
<dbReference type="Gene3D" id="3.90.320.10">
    <property type="match status" value="1"/>
</dbReference>
<dbReference type="Gene3D" id="3.40.50.300">
    <property type="entry name" value="P-loop containing nucleotide triphosphate hydrolases"/>
    <property type="match status" value="4"/>
</dbReference>
<dbReference type="HAMAP" id="MF_01451">
    <property type="entry name" value="AddA"/>
    <property type="match status" value="1"/>
</dbReference>
<dbReference type="InterPro" id="IPR014152">
    <property type="entry name" value="AddA"/>
</dbReference>
<dbReference type="InterPro" id="IPR014017">
    <property type="entry name" value="DNA_helicase_UvrD-like_C"/>
</dbReference>
<dbReference type="InterPro" id="IPR000212">
    <property type="entry name" value="DNA_helicase_UvrD/REP"/>
</dbReference>
<dbReference type="InterPro" id="IPR027417">
    <property type="entry name" value="P-loop_NTPase"/>
</dbReference>
<dbReference type="InterPro" id="IPR011604">
    <property type="entry name" value="PDDEXK-like_dom_sf"/>
</dbReference>
<dbReference type="InterPro" id="IPR038726">
    <property type="entry name" value="PDDEXK_AddAB-type"/>
</dbReference>
<dbReference type="InterPro" id="IPR011335">
    <property type="entry name" value="Restrct_endonuc-II-like"/>
</dbReference>
<dbReference type="InterPro" id="IPR014016">
    <property type="entry name" value="UvrD-like_ATP-bd"/>
</dbReference>
<dbReference type="NCBIfam" id="TIGR02785">
    <property type="entry name" value="addA_Gpos"/>
    <property type="match status" value="1"/>
</dbReference>
<dbReference type="PANTHER" id="PTHR11070:SF48">
    <property type="entry name" value="ATP-DEPENDENT HELICASE_NUCLEASE SUBUNIT A"/>
    <property type="match status" value="1"/>
</dbReference>
<dbReference type="PANTHER" id="PTHR11070">
    <property type="entry name" value="UVRD / RECB / PCRA DNA HELICASE FAMILY MEMBER"/>
    <property type="match status" value="1"/>
</dbReference>
<dbReference type="Pfam" id="PF12705">
    <property type="entry name" value="PDDEXK_1"/>
    <property type="match status" value="1"/>
</dbReference>
<dbReference type="Pfam" id="PF00580">
    <property type="entry name" value="UvrD-helicase"/>
    <property type="match status" value="1"/>
</dbReference>
<dbReference type="Pfam" id="PF13361">
    <property type="entry name" value="UvrD_C"/>
    <property type="match status" value="1"/>
</dbReference>
<dbReference type="SUPFAM" id="SSF52540">
    <property type="entry name" value="P-loop containing nucleoside triphosphate hydrolases"/>
    <property type="match status" value="1"/>
</dbReference>
<dbReference type="SUPFAM" id="SSF52980">
    <property type="entry name" value="Restriction endonuclease-like"/>
    <property type="match status" value="1"/>
</dbReference>
<dbReference type="PROSITE" id="PS51198">
    <property type="entry name" value="UVRD_HELICASE_ATP_BIND"/>
    <property type="match status" value="1"/>
</dbReference>
<dbReference type="PROSITE" id="PS51217">
    <property type="entry name" value="UVRD_HELICASE_CTER"/>
    <property type="match status" value="1"/>
</dbReference>
<proteinExistence type="inferred from homology"/>
<comment type="function">
    <text evidence="1">The heterodimer acts as both an ATP-dependent DNA helicase and an ATP-dependent, dual-direction single-stranded exonuclease. Recognizes the chi site generating a DNA molecule suitable for the initiation of homologous recombination. The AddA nuclease domain is required for chi fragment generation; this subunit has the helicase and 3' -&gt; 5' nuclease activities.</text>
</comment>
<comment type="catalytic activity">
    <reaction evidence="1">
        <text>Couples ATP hydrolysis with the unwinding of duplex DNA by translocating in the 3'-5' direction.</text>
        <dbReference type="EC" id="5.6.2.4"/>
    </reaction>
</comment>
<comment type="catalytic activity">
    <reaction evidence="1">
        <text>ATP + H2O = ADP + phosphate + H(+)</text>
        <dbReference type="Rhea" id="RHEA:13065"/>
        <dbReference type="ChEBI" id="CHEBI:15377"/>
        <dbReference type="ChEBI" id="CHEBI:15378"/>
        <dbReference type="ChEBI" id="CHEBI:30616"/>
        <dbReference type="ChEBI" id="CHEBI:43474"/>
        <dbReference type="ChEBI" id="CHEBI:456216"/>
        <dbReference type="EC" id="5.6.2.4"/>
    </reaction>
</comment>
<comment type="cofactor">
    <cofactor evidence="1">
        <name>Mg(2+)</name>
        <dbReference type="ChEBI" id="CHEBI:18420"/>
    </cofactor>
</comment>
<comment type="subunit">
    <text evidence="1">Heterodimer of AddA and AddB/RexB.</text>
</comment>
<comment type="similarity">
    <text evidence="1">Belongs to the helicase family. AddA subfamily.</text>
</comment>
<reference key="1">
    <citation type="journal article" date="2008" name="Chem. Biol. Interact.">
        <title>Extending the Bacillus cereus group genomics to putative food-borne pathogens of different toxicity.</title>
        <authorList>
            <person name="Lapidus A."/>
            <person name="Goltsman E."/>
            <person name="Auger S."/>
            <person name="Galleron N."/>
            <person name="Segurens B."/>
            <person name="Dossat C."/>
            <person name="Land M.L."/>
            <person name="Broussolle V."/>
            <person name="Brillard J."/>
            <person name="Guinebretiere M.-H."/>
            <person name="Sanchis V."/>
            <person name="Nguen-the C."/>
            <person name="Lereclus D."/>
            <person name="Richardson P."/>
            <person name="Wincker P."/>
            <person name="Weissenbach J."/>
            <person name="Ehrlich S.D."/>
            <person name="Sorokin A."/>
        </authorList>
    </citation>
    <scope>NUCLEOTIDE SEQUENCE [LARGE SCALE GENOMIC DNA]</scope>
    <source>
        <strain>DSM 22905 / CIP 110041 / 391-98 / NVH 391-98</strain>
    </source>
</reference>
<name>ADDA_BACCN</name>
<evidence type="ECO:0000255" key="1">
    <source>
        <dbReference type="HAMAP-Rule" id="MF_01451"/>
    </source>
</evidence>